<name>BOLA2_ARATH</name>
<sequence length="93" mass="10375">MVTKEQVEASLTSKLKPIHLEVIDISGGCGSSFEVEVVSEQFEGKRLLERHRMVNAALEEEMKEIHALSIKKAQTPQQWKPPSQDSATLTKDA</sequence>
<accession>Q9FIC3</accession>
<keyword id="KW-0002">3D-structure</keyword>
<keyword id="KW-0963">Cytoplasm</keyword>
<keyword id="KW-1015">Disulfide bond</keyword>
<keyword id="KW-0318">Glutathionylation</keyword>
<keyword id="KW-0539">Nucleus</keyword>
<keyword id="KW-1185">Reference proteome</keyword>
<protein>
    <recommendedName>
        <fullName evidence="6">Protein BOLA2</fullName>
    </recommendedName>
</protein>
<organism evidence="10">
    <name type="scientific">Arabidopsis thaliana</name>
    <name type="common">Mouse-ear cress</name>
    <dbReference type="NCBI Taxonomy" id="3702"/>
    <lineage>
        <taxon>Eukaryota</taxon>
        <taxon>Viridiplantae</taxon>
        <taxon>Streptophyta</taxon>
        <taxon>Embryophyta</taxon>
        <taxon>Tracheophyta</taxon>
        <taxon>Spermatophyta</taxon>
        <taxon>Magnoliopsida</taxon>
        <taxon>eudicotyledons</taxon>
        <taxon>Gunneridae</taxon>
        <taxon>Pentapetalae</taxon>
        <taxon>rosids</taxon>
        <taxon>malvids</taxon>
        <taxon>Brassicales</taxon>
        <taxon>Brassicaceae</taxon>
        <taxon>Camelineae</taxon>
        <taxon>Arabidopsis</taxon>
    </lineage>
</organism>
<evidence type="ECO:0000255" key="1">
    <source>
        <dbReference type="RuleBase" id="RU003860"/>
    </source>
</evidence>
<evidence type="ECO:0000256" key="2">
    <source>
        <dbReference type="SAM" id="MobiDB-lite"/>
    </source>
</evidence>
<evidence type="ECO:0000269" key="3">
    <source>
    </source>
</evidence>
<evidence type="ECO:0000269" key="4">
    <source>
    </source>
</evidence>
<evidence type="ECO:0000269" key="5">
    <source>
    </source>
</evidence>
<evidence type="ECO:0000303" key="6">
    <source>
    </source>
</evidence>
<evidence type="ECO:0000305" key="7">
    <source>
    </source>
</evidence>
<evidence type="ECO:0000312" key="8">
    <source>
        <dbReference type="Araport" id="AT5G09830"/>
    </source>
</evidence>
<evidence type="ECO:0000312" key="9">
    <source>
        <dbReference type="EMBL" id="BAB09404.1"/>
    </source>
</evidence>
<evidence type="ECO:0000312" key="10">
    <source>
        <dbReference type="Proteomes" id="UP000006548"/>
    </source>
</evidence>
<evidence type="ECO:0007829" key="11">
    <source>
        <dbReference type="PDB" id="2MM9"/>
    </source>
</evidence>
<evidence type="ECO:0007829" key="12">
    <source>
        <dbReference type="PDB" id="4PUH"/>
    </source>
</evidence>
<reference key="1">
    <citation type="journal article" date="1998" name="DNA Res.">
        <title>Structural analysis of Arabidopsis thaliana chromosome 5. VIII. Sequence features of the regions of 1,081,958 bp covered by seventeen physically assigned P1 and TAC clones.</title>
        <authorList>
            <person name="Asamizu E."/>
            <person name="Sato S."/>
            <person name="Kaneko T."/>
            <person name="Nakamura Y."/>
            <person name="Kotani H."/>
            <person name="Miyajima N."/>
            <person name="Tabata S."/>
        </authorList>
    </citation>
    <scope>NUCLEOTIDE SEQUENCE [LARGE SCALE GENOMIC DNA]</scope>
    <source>
        <strain>cv. Columbia</strain>
    </source>
</reference>
<reference key="2">
    <citation type="journal article" date="2017" name="Plant J.">
        <title>Araport11: a complete reannotation of the Arabidopsis thaliana reference genome.</title>
        <authorList>
            <person name="Cheng C.Y."/>
            <person name="Krishnakumar V."/>
            <person name="Chan A.P."/>
            <person name="Thibaud-Nissen F."/>
            <person name="Schobel S."/>
            <person name="Town C.D."/>
        </authorList>
    </citation>
    <scope>GENOME REANNOTATION</scope>
    <source>
        <strain>cv. Columbia</strain>
    </source>
</reference>
<reference key="3">
    <citation type="journal article" date="2003" name="Science">
        <title>Empirical analysis of transcriptional activity in the Arabidopsis genome.</title>
        <authorList>
            <person name="Yamada K."/>
            <person name="Lim J."/>
            <person name="Dale J.M."/>
            <person name="Chen H."/>
            <person name="Shinn P."/>
            <person name="Palm C.J."/>
            <person name="Southwick A.M."/>
            <person name="Wu H.C."/>
            <person name="Kim C.J."/>
            <person name="Nguyen M."/>
            <person name="Pham P.K."/>
            <person name="Cheuk R.F."/>
            <person name="Karlin-Newmann G."/>
            <person name="Liu S.X."/>
            <person name="Lam B."/>
            <person name="Sakano H."/>
            <person name="Wu T."/>
            <person name="Yu G."/>
            <person name="Miranda M."/>
            <person name="Quach H.L."/>
            <person name="Tripp M."/>
            <person name="Chang C.H."/>
            <person name="Lee J.M."/>
            <person name="Toriumi M.J."/>
            <person name="Chan M.M."/>
            <person name="Tang C.C."/>
            <person name="Onodera C.S."/>
            <person name="Deng J.M."/>
            <person name="Akiyama K."/>
            <person name="Ansari Y."/>
            <person name="Arakawa T."/>
            <person name="Banh J."/>
            <person name="Banno F."/>
            <person name="Bowser L."/>
            <person name="Brooks S.Y."/>
            <person name="Carninci P."/>
            <person name="Chao Q."/>
            <person name="Choy N."/>
            <person name="Enju A."/>
            <person name="Goldsmith A.D."/>
            <person name="Gurjal M."/>
            <person name="Hansen N.F."/>
            <person name="Hayashizaki Y."/>
            <person name="Johnson-Hopson C."/>
            <person name="Hsuan V.W."/>
            <person name="Iida K."/>
            <person name="Karnes M."/>
            <person name="Khan S."/>
            <person name="Koesema E."/>
            <person name="Ishida J."/>
            <person name="Jiang P.X."/>
            <person name="Jones T."/>
            <person name="Kawai J."/>
            <person name="Kamiya A."/>
            <person name="Meyers C."/>
            <person name="Nakajima M."/>
            <person name="Narusaka M."/>
            <person name="Seki M."/>
            <person name="Sakurai T."/>
            <person name="Satou M."/>
            <person name="Tamse R."/>
            <person name="Vaysberg M."/>
            <person name="Wallender E.K."/>
            <person name="Wong C."/>
            <person name="Yamamura Y."/>
            <person name="Yuan S."/>
            <person name="Shinozaki K."/>
            <person name="Davis R.W."/>
            <person name="Theologis A."/>
            <person name="Ecker J.R."/>
        </authorList>
    </citation>
    <scope>NUCLEOTIDE SEQUENCE [LARGE SCALE MRNA]</scope>
    <source>
        <strain>cv. Columbia</strain>
    </source>
</reference>
<reference key="4">
    <citation type="submission" date="2006-07" db="EMBL/GenBank/DDBJ databases">
        <title>Large-scale analysis of RIKEN Arabidopsis full-length (RAFL) cDNAs.</title>
        <authorList>
            <person name="Totoki Y."/>
            <person name="Seki M."/>
            <person name="Ishida J."/>
            <person name="Nakajima M."/>
            <person name="Enju A."/>
            <person name="Kamiya A."/>
            <person name="Narusaka M."/>
            <person name="Shin-i T."/>
            <person name="Nakagawa M."/>
            <person name="Sakamoto N."/>
            <person name="Oishi K."/>
            <person name="Kohara Y."/>
            <person name="Kobayashi M."/>
            <person name="Toyoda A."/>
            <person name="Sakaki Y."/>
            <person name="Sakurai T."/>
            <person name="Iida K."/>
            <person name="Akiyama K."/>
            <person name="Satou M."/>
            <person name="Toyoda T."/>
            <person name="Konagaya A."/>
            <person name="Carninci P."/>
            <person name="Kawai J."/>
            <person name="Hayashizaki Y."/>
            <person name="Shinozaki K."/>
        </authorList>
    </citation>
    <scope>NUCLEOTIDE SEQUENCE [LARGE SCALE MRNA]</scope>
    <source>
        <strain>cv. Columbia</strain>
    </source>
</reference>
<reference key="5">
    <citation type="submission" date="2002-03" db="EMBL/GenBank/DDBJ databases">
        <title>Full-length cDNA from Arabidopsis thaliana.</title>
        <authorList>
            <person name="Brover V.V."/>
            <person name="Troukhan M.E."/>
            <person name="Alexandrov N.A."/>
            <person name="Lu Y.-P."/>
            <person name="Flavell R.B."/>
            <person name="Feldmann K.A."/>
        </authorList>
    </citation>
    <scope>NUCLEOTIDE SEQUENCE [LARGE SCALE MRNA]</scope>
</reference>
<reference key="6">
    <citation type="journal article" date="2014" name="Mol. Plant">
        <title>Monothiol glutaredoxin-BolA interactions: redox control of Arabidopsis thaliana BolA2 and SufE1.</title>
        <authorList>
            <person name="Couturier J."/>
            <person name="Wu H.C."/>
            <person name="Dhalleine T."/>
            <person name="Pegeot H."/>
            <person name="Sudre D."/>
            <person name="Gualberto J.M."/>
            <person name="Jacquot J.P."/>
            <person name="Gaymard F."/>
            <person name="Vignols F."/>
            <person name="Rouhier N."/>
        </authorList>
    </citation>
    <scope>SUBCELLULAR LOCATION</scope>
    <scope>INTERACTION WITH GRXC5; GRXS14; GRXS15; GRXS16 AND GRXS17</scope>
    <scope>GLUTATHIONYLATION AT CYS-29</scope>
    <scope>SUBUNIT</scope>
    <scope>GENE FAMILY</scope>
    <scope>NOMENCLATURE</scope>
</reference>
<reference key="7">
    <citation type="journal article" date="2014" name="Plant Signal. Behav.">
        <title>Putative roles of glutaredoxin-BolA holo-heterodimers in plants.</title>
        <authorList>
            <person name="Dhalleine T."/>
            <person name="Rouhier N."/>
            <person name="Couturier J."/>
        </authorList>
    </citation>
    <scope>FUNCTION</scope>
    <scope>INTERACTION WITH GRXS17</scope>
</reference>
<reference key="8">
    <citation type="journal article" date="2014" name="J. Biol. Chem.">
        <title>Structural and spectroscopic insights into BolA-glutaredoxin complexes.</title>
        <authorList>
            <person name="Roret T."/>
            <person name="Tsan P."/>
            <person name="Couturier J."/>
            <person name="Zhang B."/>
            <person name="Johnson M.K."/>
            <person name="Rouhier N."/>
            <person name="Didierjean C."/>
        </authorList>
    </citation>
    <scope>STRUCTURE BY NMR IN COMPLEX WITH GRXS17</scope>
    <scope>DOMAIN</scope>
</reference>
<comment type="function">
    <text evidence="4 7">May act either alone or in interaction with glutaredoxin as a redox-regulated transcriptional regulator, or as a factor regulating Fe-S cluster biogenesis (Probable). The GRXS17-BOLA2 heterodimer binds a labile, oxygen sensitive iron-sulfur cluster (PubMed:24714563).</text>
</comment>
<comment type="subunit">
    <text evidence="3 4">Homodimer (PubMed:24203231). Interacts in vitro with GRXS14, GRXS15, GRXS16 and GRXS17, but not with GRXC5 (PubMed:24203231). Interacts in vivo only with GRXS17 (PubMed:24203231, PubMed:24714563).</text>
</comment>
<comment type="subcellular location">
    <subcellularLocation>
        <location evidence="3">Cytoplasm</location>
    </subcellularLocation>
    <subcellularLocation>
        <location evidence="3">Nucleus</location>
    </subcellularLocation>
</comment>
<comment type="domain">
    <text evidence="5">The putative nucleic acid binding region (34-77) coincides with the interaction surface with glutaredoxin.</text>
</comment>
<comment type="PTM">
    <text evidence="3">Can be either glutathionylated or forming covalent homodimers, depending on the oxidation state.</text>
</comment>
<comment type="similarity">
    <text evidence="1">Belongs to the bolA/yrbA family.</text>
</comment>
<dbReference type="EMBL" id="AB016893">
    <property type="protein sequence ID" value="BAB09404.1"/>
    <property type="molecule type" value="Genomic_DNA"/>
</dbReference>
<dbReference type="EMBL" id="CP002688">
    <property type="protein sequence ID" value="AED91453.1"/>
    <property type="molecule type" value="Genomic_DNA"/>
</dbReference>
<dbReference type="EMBL" id="BT003151">
    <property type="protein sequence ID" value="AAO24583.1"/>
    <property type="molecule type" value="mRNA"/>
</dbReference>
<dbReference type="EMBL" id="AK228169">
    <property type="protein sequence ID" value="BAF00125.1"/>
    <property type="molecule type" value="mRNA"/>
</dbReference>
<dbReference type="EMBL" id="AY087656">
    <property type="protein sequence ID" value="AAM65194.1"/>
    <property type="molecule type" value="mRNA"/>
</dbReference>
<dbReference type="RefSeq" id="NP_568217.1">
    <property type="nucleotide sequence ID" value="NM_121020.5"/>
</dbReference>
<dbReference type="PDB" id="2MM9">
    <property type="method" value="NMR"/>
    <property type="chains" value="A=1-93"/>
</dbReference>
<dbReference type="PDB" id="2MMA">
    <property type="method" value="NMR"/>
    <property type="chains" value="B=2-93"/>
</dbReference>
<dbReference type="PDB" id="4PUH">
    <property type="method" value="X-ray"/>
    <property type="resolution" value="1.90 A"/>
    <property type="chains" value="A/B=1-93"/>
</dbReference>
<dbReference type="PDBsum" id="2MM9"/>
<dbReference type="PDBsum" id="2MMA"/>
<dbReference type="PDBsum" id="4PUH"/>
<dbReference type="BMRB" id="Q9FIC3"/>
<dbReference type="SMR" id="Q9FIC3"/>
<dbReference type="FunCoup" id="Q9FIC3">
    <property type="interactions" value="2542"/>
</dbReference>
<dbReference type="IntAct" id="Q9FIC3">
    <property type="interactions" value="3"/>
</dbReference>
<dbReference type="STRING" id="3702.Q9FIC3"/>
<dbReference type="PaxDb" id="3702-AT5G09830.1"/>
<dbReference type="ProteomicsDB" id="240671"/>
<dbReference type="EnsemblPlants" id="AT5G09830.1">
    <property type="protein sequence ID" value="AT5G09830.1"/>
    <property type="gene ID" value="AT5G09830"/>
</dbReference>
<dbReference type="GeneID" id="830843"/>
<dbReference type="Gramene" id="AT5G09830.1">
    <property type="protein sequence ID" value="AT5G09830.1"/>
    <property type="gene ID" value="AT5G09830"/>
</dbReference>
<dbReference type="KEGG" id="ath:AT5G09830"/>
<dbReference type="Araport" id="AT5G09830"/>
<dbReference type="TAIR" id="AT5G09830">
    <property type="gene designation" value="BOLA2"/>
</dbReference>
<dbReference type="eggNOG" id="KOG3348">
    <property type="taxonomic scope" value="Eukaryota"/>
</dbReference>
<dbReference type="HOGENOM" id="CLU_109462_4_0_1"/>
<dbReference type="InParanoid" id="Q9FIC3"/>
<dbReference type="OMA" id="NEMASIH"/>
<dbReference type="OrthoDB" id="4983at2759"/>
<dbReference type="PhylomeDB" id="Q9FIC3"/>
<dbReference type="EvolutionaryTrace" id="Q9FIC3"/>
<dbReference type="PRO" id="PR:Q9FIC3"/>
<dbReference type="Proteomes" id="UP000006548">
    <property type="component" value="Chromosome 5"/>
</dbReference>
<dbReference type="ExpressionAtlas" id="Q9FIC3">
    <property type="expression patterns" value="baseline and differential"/>
</dbReference>
<dbReference type="GO" id="GO:0005737">
    <property type="term" value="C:cytoplasm"/>
    <property type="evidence" value="ECO:0000314"/>
    <property type="project" value="TAIR"/>
</dbReference>
<dbReference type="GO" id="GO:0005829">
    <property type="term" value="C:cytosol"/>
    <property type="evidence" value="ECO:0000314"/>
    <property type="project" value="TAIR"/>
</dbReference>
<dbReference type="GO" id="GO:0005634">
    <property type="term" value="C:nucleus"/>
    <property type="evidence" value="ECO:0000314"/>
    <property type="project" value="TAIR"/>
</dbReference>
<dbReference type="GO" id="GO:0005886">
    <property type="term" value="C:plasma membrane"/>
    <property type="evidence" value="ECO:0007005"/>
    <property type="project" value="TAIR"/>
</dbReference>
<dbReference type="GO" id="GO:0051537">
    <property type="term" value="F:2 iron, 2 sulfur cluster binding"/>
    <property type="evidence" value="ECO:0007669"/>
    <property type="project" value="InterPro"/>
</dbReference>
<dbReference type="GO" id="GO:0006879">
    <property type="term" value="P:intracellular iron ion homeostasis"/>
    <property type="evidence" value="ECO:0007669"/>
    <property type="project" value="InterPro"/>
</dbReference>
<dbReference type="GO" id="GO:0051604">
    <property type="term" value="P:protein maturation"/>
    <property type="evidence" value="ECO:0007669"/>
    <property type="project" value="InterPro"/>
</dbReference>
<dbReference type="GO" id="GO:0010039">
    <property type="term" value="P:response to iron ion"/>
    <property type="evidence" value="ECO:0000315"/>
    <property type="project" value="TAIR"/>
</dbReference>
<dbReference type="GO" id="GO:0006979">
    <property type="term" value="P:response to oxidative stress"/>
    <property type="evidence" value="ECO:0000315"/>
    <property type="project" value="TAIR"/>
</dbReference>
<dbReference type="FunFam" id="3.30.300.90:FF:000006">
    <property type="entry name" value="Protein BOLA2"/>
    <property type="match status" value="1"/>
</dbReference>
<dbReference type="Gene3D" id="3.30.300.90">
    <property type="entry name" value="BolA-like"/>
    <property type="match status" value="1"/>
</dbReference>
<dbReference type="InterPro" id="IPR045115">
    <property type="entry name" value="BOL2"/>
</dbReference>
<dbReference type="InterPro" id="IPR002634">
    <property type="entry name" value="BolA"/>
</dbReference>
<dbReference type="InterPro" id="IPR036065">
    <property type="entry name" value="BolA-like_sf"/>
</dbReference>
<dbReference type="PANTHER" id="PTHR12735:SF27">
    <property type="entry name" value="BOLA-LIKE PROTEIN 2"/>
    <property type="match status" value="1"/>
</dbReference>
<dbReference type="PANTHER" id="PTHR12735">
    <property type="entry name" value="BOLA-LIKE PROTEIN-RELATED"/>
    <property type="match status" value="1"/>
</dbReference>
<dbReference type="Pfam" id="PF01722">
    <property type="entry name" value="BolA"/>
    <property type="match status" value="1"/>
</dbReference>
<dbReference type="PIRSF" id="PIRSF003113">
    <property type="entry name" value="BolA"/>
    <property type="match status" value="1"/>
</dbReference>
<dbReference type="SUPFAM" id="SSF82657">
    <property type="entry name" value="BolA-like"/>
    <property type="match status" value="1"/>
</dbReference>
<gene>
    <name evidence="6" type="primary">BOLA2</name>
    <name evidence="8" type="ordered locus">At5g09830</name>
    <name evidence="9" type="ORF">MYH9.4</name>
</gene>
<proteinExistence type="evidence at protein level"/>
<feature type="chain" id="PRO_0000432128" description="Protein BOLA2">
    <location>
        <begin position="1"/>
        <end position="93"/>
    </location>
</feature>
<feature type="region of interest" description="Disordered" evidence="2">
    <location>
        <begin position="72"/>
        <end position="93"/>
    </location>
</feature>
<feature type="modified residue" description="S-glutathionyl cysteine; transient; alternate" evidence="7">
    <location>
        <position position="29"/>
    </location>
</feature>
<feature type="disulfide bond" description="Interchain; alternate" evidence="7">
    <location>
        <position position="29"/>
    </location>
</feature>
<feature type="helix" evidence="12">
    <location>
        <begin position="4"/>
        <end position="15"/>
    </location>
</feature>
<feature type="strand" evidence="12">
    <location>
        <begin position="18"/>
        <end position="24"/>
    </location>
</feature>
<feature type="strand" evidence="12">
    <location>
        <begin position="26"/>
        <end position="38"/>
    </location>
</feature>
<feature type="helix" evidence="12">
    <location>
        <begin position="40"/>
        <end position="42"/>
    </location>
</feature>
<feature type="helix" evidence="12">
    <location>
        <begin position="47"/>
        <end position="57"/>
    </location>
</feature>
<feature type="turn" evidence="12">
    <location>
        <begin position="58"/>
        <end position="60"/>
    </location>
</feature>
<feature type="helix" evidence="12">
    <location>
        <begin position="61"/>
        <end position="63"/>
    </location>
</feature>
<feature type="strand" evidence="12">
    <location>
        <begin position="66"/>
        <end position="74"/>
    </location>
</feature>
<feature type="helix" evidence="12">
    <location>
        <begin position="76"/>
        <end position="79"/>
    </location>
</feature>
<feature type="helix" evidence="11">
    <location>
        <begin position="86"/>
        <end position="88"/>
    </location>
</feature>